<feature type="chain" id="PRO_1000077189" description="Serine--tRNA ligase">
    <location>
        <begin position="1"/>
        <end position="474"/>
    </location>
</feature>
<feature type="binding site" evidence="1">
    <location>
        <begin position="278"/>
        <end position="280"/>
    </location>
    <ligand>
        <name>L-serine</name>
        <dbReference type="ChEBI" id="CHEBI:33384"/>
    </ligand>
</feature>
<feature type="binding site" evidence="1">
    <location>
        <begin position="309"/>
        <end position="311"/>
    </location>
    <ligand>
        <name>ATP</name>
        <dbReference type="ChEBI" id="CHEBI:30616"/>
    </ligand>
</feature>
<feature type="binding site" evidence="1">
    <location>
        <position position="332"/>
    </location>
    <ligand>
        <name>L-serine</name>
        <dbReference type="ChEBI" id="CHEBI:33384"/>
    </ligand>
</feature>
<feature type="binding site" evidence="1">
    <location>
        <begin position="396"/>
        <end position="399"/>
    </location>
    <ligand>
        <name>ATP</name>
        <dbReference type="ChEBI" id="CHEBI:30616"/>
    </ligand>
</feature>
<feature type="binding site" evidence="1">
    <location>
        <position position="432"/>
    </location>
    <ligand>
        <name>L-serine</name>
        <dbReference type="ChEBI" id="CHEBI:33384"/>
    </ligand>
</feature>
<keyword id="KW-0030">Aminoacyl-tRNA synthetase</keyword>
<keyword id="KW-0067">ATP-binding</keyword>
<keyword id="KW-0963">Cytoplasm</keyword>
<keyword id="KW-0436">Ligase</keyword>
<keyword id="KW-0547">Nucleotide-binding</keyword>
<keyword id="KW-0648">Protein biosynthesis</keyword>
<gene>
    <name evidence="1" type="primary">serS</name>
    <name type="ordered locus">Caul_3115</name>
</gene>
<dbReference type="EC" id="6.1.1.11" evidence="1"/>
<dbReference type="EMBL" id="CP000927">
    <property type="protein sequence ID" value="ABZ72242.1"/>
    <property type="molecule type" value="Genomic_DNA"/>
</dbReference>
<dbReference type="SMR" id="B0T1Q3"/>
<dbReference type="STRING" id="366602.Caul_3115"/>
<dbReference type="KEGG" id="cak:Caul_3115"/>
<dbReference type="eggNOG" id="COG0172">
    <property type="taxonomic scope" value="Bacteria"/>
</dbReference>
<dbReference type="HOGENOM" id="CLU_023797_1_1_5"/>
<dbReference type="OrthoDB" id="9804647at2"/>
<dbReference type="UniPathway" id="UPA00906">
    <property type="reaction ID" value="UER00895"/>
</dbReference>
<dbReference type="GO" id="GO:0005737">
    <property type="term" value="C:cytoplasm"/>
    <property type="evidence" value="ECO:0007669"/>
    <property type="project" value="UniProtKB-SubCell"/>
</dbReference>
<dbReference type="GO" id="GO:0005524">
    <property type="term" value="F:ATP binding"/>
    <property type="evidence" value="ECO:0007669"/>
    <property type="project" value="UniProtKB-UniRule"/>
</dbReference>
<dbReference type="GO" id="GO:0004828">
    <property type="term" value="F:serine-tRNA ligase activity"/>
    <property type="evidence" value="ECO:0007669"/>
    <property type="project" value="UniProtKB-UniRule"/>
</dbReference>
<dbReference type="GO" id="GO:0016260">
    <property type="term" value="P:selenocysteine biosynthetic process"/>
    <property type="evidence" value="ECO:0007669"/>
    <property type="project" value="UniProtKB-UniRule"/>
</dbReference>
<dbReference type="GO" id="GO:0006434">
    <property type="term" value="P:seryl-tRNA aminoacylation"/>
    <property type="evidence" value="ECO:0007669"/>
    <property type="project" value="UniProtKB-UniRule"/>
</dbReference>
<dbReference type="CDD" id="cd00770">
    <property type="entry name" value="SerRS_core"/>
    <property type="match status" value="1"/>
</dbReference>
<dbReference type="Gene3D" id="3.30.930.10">
    <property type="entry name" value="Bira Bifunctional Protein, Domain 2"/>
    <property type="match status" value="1"/>
</dbReference>
<dbReference type="Gene3D" id="1.10.287.40">
    <property type="entry name" value="Serine-tRNA synthetase, tRNA binding domain"/>
    <property type="match status" value="1"/>
</dbReference>
<dbReference type="HAMAP" id="MF_00176">
    <property type="entry name" value="Ser_tRNA_synth_type1"/>
    <property type="match status" value="1"/>
</dbReference>
<dbReference type="InterPro" id="IPR002314">
    <property type="entry name" value="aa-tRNA-synt_IIb"/>
</dbReference>
<dbReference type="InterPro" id="IPR006195">
    <property type="entry name" value="aa-tRNA-synth_II"/>
</dbReference>
<dbReference type="InterPro" id="IPR045864">
    <property type="entry name" value="aa-tRNA-synth_II/BPL/LPL"/>
</dbReference>
<dbReference type="InterPro" id="IPR002317">
    <property type="entry name" value="Ser-tRNA-ligase_type_1"/>
</dbReference>
<dbReference type="InterPro" id="IPR015866">
    <property type="entry name" value="Ser-tRNA-synth_1_N"/>
</dbReference>
<dbReference type="InterPro" id="IPR042103">
    <property type="entry name" value="SerRS_1_N_sf"/>
</dbReference>
<dbReference type="InterPro" id="IPR033729">
    <property type="entry name" value="SerRS_core"/>
</dbReference>
<dbReference type="InterPro" id="IPR010978">
    <property type="entry name" value="tRNA-bd_arm"/>
</dbReference>
<dbReference type="NCBIfam" id="TIGR00414">
    <property type="entry name" value="serS"/>
    <property type="match status" value="1"/>
</dbReference>
<dbReference type="PANTHER" id="PTHR43697:SF1">
    <property type="entry name" value="SERINE--TRNA LIGASE"/>
    <property type="match status" value="1"/>
</dbReference>
<dbReference type="PANTHER" id="PTHR43697">
    <property type="entry name" value="SERYL-TRNA SYNTHETASE"/>
    <property type="match status" value="1"/>
</dbReference>
<dbReference type="Pfam" id="PF02403">
    <property type="entry name" value="Seryl_tRNA_N"/>
    <property type="match status" value="1"/>
</dbReference>
<dbReference type="Pfam" id="PF00587">
    <property type="entry name" value="tRNA-synt_2b"/>
    <property type="match status" value="1"/>
</dbReference>
<dbReference type="PIRSF" id="PIRSF001529">
    <property type="entry name" value="Ser-tRNA-synth_IIa"/>
    <property type="match status" value="1"/>
</dbReference>
<dbReference type="PRINTS" id="PR00981">
    <property type="entry name" value="TRNASYNTHSER"/>
</dbReference>
<dbReference type="SUPFAM" id="SSF55681">
    <property type="entry name" value="Class II aaRS and biotin synthetases"/>
    <property type="match status" value="1"/>
</dbReference>
<dbReference type="SUPFAM" id="SSF46589">
    <property type="entry name" value="tRNA-binding arm"/>
    <property type="match status" value="1"/>
</dbReference>
<dbReference type="PROSITE" id="PS50862">
    <property type="entry name" value="AA_TRNA_LIGASE_II"/>
    <property type="match status" value="1"/>
</dbReference>
<name>SYS_CAUSK</name>
<accession>B0T1Q3</accession>
<proteinExistence type="inferred from homology"/>
<organism>
    <name type="scientific">Caulobacter sp. (strain K31)</name>
    <dbReference type="NCBI Taxonomy" id="366602"/>
    <lineage>
        <taxon>Bacteria</taxon>
        <taxon>Pseudomonadati</taxon>
        <taxon>Pseudomonadota</taxon>
        <taxon>Alphaproteobacteria</taxon>
        <taxon>Caulobacterales</taxon>
        <taxon>Caulobacteraceae</taxon>
        <taxon>Caulobacter</taxon>
    </lineage>
</organism>
<comment type="function">
    <text evidence="1">Catalyzes the attachment of serine to tRNA(Ser). Is also able to aminoacylate tRNA(Sec) with serine, to form the misacylated tRNA L-seryl-tRNA(Sec), which will be further converted into selenocysteinyl-tRNA(Sec).</text>
</comment>
<comment type="catalytic activity">
    <reaction evidence="1">
        <text>tRNA(Ser) + L-serine + ATP = L-seryl-tRNA(Ser) + AMP + diphosphate + H(+)</text>
        <dbReference type="Rhea" id="RHEA:12292"/>
        <dbReference type="Rhea" id="RHEA-COMP:9669"/>
        <dbReference type="Rhea" id="RHEA-COMP:9703"/>
        <dbReference type="ChEBI" id="CHEBI:15378"/>
        <dbReference type="ChEBI" id="CHEBI:30616"/>
        <dbReference type="ChEBI" id="CHEBI:33019"/>
        <dbReference type="ChEBI" id="CHEBI:33384"/>
        <dbReference type="ChEBI" id="CHEBI:78442"/>
        <dbReference type="ChEBI" id="CHEBI:78533"/>
        <dbReference type="ChEBI" id="CHEBI:456215"/>
        <dbReference type="EC" id="6.1.1.11"/>
    </reaction>
</comment>
<comment type="catalytic activity">
    <reaction evidence="1">
        <text>tRNA(Sec) + L-serine + ATP = L-seryl-tRNA(Sec) + AMP + diphosphate + H(+)</text>
        <dbReference type="Rhea" id="RHEA:42580"/>
        <dbReference type="Rhea" id="RHEA-COMP:9742"/>
        <dbReference type="Rhea" id="RHEA-COMP:10128"/>
        <dbReference type="ChEBI" id="CHEBI:15378"/>
        <dbReference type="ChEBI" id="CHEBI:30616"/>
        <dbReference type="ChEBI" id="CHEBI:33019"/>
        <dbReference type="ChEBI" id="CHEBI:33384"/>
        <dbReference type="ChEBI" id="CHEBI:78442"/>
        <dbReference type="ChEBI" id="CHEBI:78533"/>
        <dbReference type="ChEBI" id="CHEBI:456215"/>
        <dbReference type="EC" id="6.1.1.11"/>
    </reaction>
</comment>
<comment type="pathway">
    <text evidence="1">Aminoacyl-tRNA biosynthesis; selenocysteinyl-tRNA(Sec) biosynthesis; L-seryl-tRNA(Sec) from L-serine and tRNA(Sec): step 1/1.</text>
</comment>
<comment type="subunit">
    <text evidence="1">Homodimer. The tRNA molecule binds across the dimer.</text>
</comment>
<comment type="subcellular location">
    <subcellularLocation>
        <location evidence="1">Cytoplasm</location>
    </subcellularLocation>
</comment>
<comment type="domain">
    <text evidence="1">Consists of two distinct domains, a catalytic core and a N-terminal extension that is involved in tRNA binding.</text>
</comment>
<comment type="similarity">
    <text evidence="1">Belongs to the class-II aminoacyl-tRNA synthetase family. Type-1 seryl-tRNA synthetase subfamily.</text>
</comment>
<evidence type="ECO:0000255" key="1">
    <source>
        <dbReference type="HAMAP-Rule" id="MF_00176"/>
    </source>
</evidence>
<protein>
    <recommendedName>
        <fullName evidence="1">Serine--tRNA ligase</fullName>
        <ecNumber evidence="1">6.1.1.11</ecNumber>
    </recommendedName>
    <alternativeName>
        <fullName evidence="1">Seryl-tRNA synthetase</fullName>
        <shortName evidence="1">SerRS</shortName>
    </alternativeName>
    <alternativeName>
        <fullName evidence="1">Seryl-tRNA(Ser/Sec) synthetase</fullName>
    </alternativeName>
</protein>
<sequence length="474" mass="51679">MHDIKAIRDNQQAFEAAWSAKGRSGAAAEAVKLDALLRAAQTALQEAQAKRNESSKLIGMAKAKKDEAEATRLMAEVEHLKAVMASAAQTETEVGGQLRDLLASLPNIPAPEVPAGEDEAGNVEIRRWGDASKLPAGRLNNPKDHVDLGAALGGMDFEAAARMSGARFVVLKGQIARLERALGQFMLDLQTVQHGYTEVSPPLLVKDEALFGTGQLPKFKADLFKTSEQNWVERLDEQIALRVPPLLNITQTDVVENLKGLRAAASMDEQAARWLIPTAEVSLTNIVREQITDEAELPLRMTALTPSFRSEAGASGRDTRGMIRQHQFYKVELVSITTPDQSDEEHERMVGCAEAVLKALELPFRTMLLCTGDMGFGAKKTYDLEVWLPSQNTYREISSCSNCGDFQARRMDARFKKVGEKGARYVHTLNGSGLAVGRTLVAVLENYQDETGRITVPAVLVPYMGGVTHIGGEA</sequence>
<reference key="1">
    <citation type="submission" date="2008-01" db="EMBL/GenBank/DDBJ databases">
        <title>Complete sequence of chromosome of Caulobacter sp. K31.</title>
        <authorList>
            <consortium name="US DOE Joint Genome Institute"/>
            <person name="Copeland A."/>
            <person name="Lucas S."/>
            <person name="Lapidus A."/>
            <person name="Barry K."/>
            <person name="Glavina del Rio T."/>
            <person name="Dalin E."/>
            <person name="Tice H."/>
            <person name="Pitluck S."/>
            <person name="Bruce D."/>
            <person name="Goodwin L."/>
            <person name="Thompson L.S."/>
            <person name="Brettin T."/>
            <person name="Detter J.C."/>
            <person name="Han C."/>
            <person name="Schmutz J."/>
            <person name="Larimer F."/>
            <person name="Land M."/>
            <person name="Hauser L."/>
            <person name="Kyrpides N."/>
            <person name="Kim E."/>
            <person name="Stephens C."/>
            <person name="Richardson P."/>
        </authorList>
    </citation>
    <scope>NUCLEOTIDE SEQUENCE [LARGE SCALE GENOMIC DNA]</scope>
    <source>
        <strain>K31</strain>
    </source>
</reference>